<proteinExistence type="inferred from homology"/>
<dbReference type="EC" id="6.3.5.2" evidence="1"/>
<dbReference type="EMBL" id="CP001321">
    <property type="protein sequence ID" value="ACL31984.1"/>
    <property type="molecule type" value="Genomic_DNA"/>
</dbReference>
<dbReference type="RefSeq" id="WP_012621660.1">
    <property type="nucleotide sequence ID" value="NC_011852.1"/>
</dbReference>
<dbReference type="SMR" id="B8F3T2"/>
<dbReference type="STRING" id="557723.HAPS_0297"/>
<dbReference type="MEROPS" id="C26.957"/>
<dbReference type="GeneID" id="66618732"/>
<dbReference type="KEGG" id="hap:HAPS_0297"/>
<dbReference type="PATRIC" id="fig|557723.8.peg.304"/>
<dbReference type="HOGENOM" id="CLU_014340_0_5_6"/>
<dbReference type="UniPathway" id="UPA00189">
    <property type="reaction ID" value="UER00296"/>
</dbReference>
<dbReference type="Proteomes" id="UP000006743">
    <property type="component" value="Chromosome"/>
</dbReference>
<dbReference type="GO" id="GO:0005829">
    <property type="term" value="C:cytosol"/>
    <property type="evidence" value="ECO:0007669"/>
    <property type="project" value="TreeGrafter"/>
</dbReference>
<dbReference type="GO" id="GO:0005524">
    <property type="term" value="F:ATP binding"/>
    <property type="evidence" value="ECO:0007669"/>
    <property type="project" value="UniProtKB-UniRule"/>
</dbReference>
<dbReference type="GO" id="GO:0003921">
    <property type="term" value="F:GMP synthase activity"/>
    <property type="evidence" value="ECO:0007669"/>
    <property type="project" value="InterPro"/>
</dbReference>
<dbReference type="CDD" id="cd01742">
    <property type="entry name" value="GATase1_GMP_Synthase"/>
    <property type="match status" value="1"/>
</dbReference>
<dbReference type="CDD" id="cd01997">
    <property type="entry name" value="GMP_synthase_C"/>
    <property type="match status" value="1"/>
</dbReference>
<dbReference type="FunFam" id="3.30.300.10:FF:000002">
    <property type="entry name" value="GMP synthase [glutamine-hydrolyzing]"/>
    <property type="match status" value="1"/>
</dbReference>
<dbReference type="FunFam" id="3.40.50.620:FF:000001">
    <property type="entry name" value="GMP synthase [glutamine-hydrolyzing]"/>
    <property type="match status" value="1"/>
</dbReference>
<dbReference type="FunFam" id="3.40.50.880:FF:000001">
    <property type="entry name" value="GMP synthase [glutamine-hydrolyzing]"/>
    <property type="match status" value="1"/>
</dbReference>
<dbReference type="Gene3D" id="3.30.300.10">
    <property type="match status" value="1"/>
</dbReference>
<dbReference type="Gene3D" id="3.40.50.880">
    <property type="match status" value="1"/>
</dbReference>
<dbReference type="Gene3D" id="3.40.50.620">
    <property type="entry name" value="HUPs"/>
    <property type="match status" value="1"/>
</dbReference>
<dbReference type="HAMAP" id="MF_00344">
    <property type="entry name" value="GMP_synthase"/>
    <property type="match status" value="1"/>
</dbReference>
<dbReference type="InterPro" id="IPR029062">
    <property type="entry name" value="Class_I_gatase-like"/>
</dbReference>
<dbReference type="InterPro" id="IPR017926">
    <property type="entry name" value="GATASE"/>
</dbReference>
<dbReference type="InterPro" id="IPR001674">
    <property type="entry name" value="GMP_synth_C"/>
</dbReference>
<dbReference type="InterPro" id="IPR004739">
    <property type="entry name" value="GMP_synth_GATase"/>
</dbReference>
<dbReference type="InterPro" id="IPR022955">
    <property type="entry name" value="GMP_synthase"/>
</dbReference>
<dbReference type="InterPro" id="IPR025777">
    <property type="entry name" value="GMPS_ATP_PPase_dom"/>
</dbReference>
<dbReference type="InterPro" id="IPR022310">
    <property type="entry name" value="NAD/GMP_synthase"/>
</dbReference>
<dbReference type="InterPro" id="IPR014729">
    <property type="entry name" value="Rossmann-like_a/b/a_fold"/>
</dbReference>
<dbReference type="NCBIfam" id="TIGR00884">
    <property type="entry name" value="guaA_Cterm"/>
    <property type="match status" value="1"/>
</dbReference>
<dbReference type="NCBIfam" id="TIGR00888">
    <property type="entry name" value="guaA_Nterm"/>
    <property type="match status" value="1"/>
</dbReference>
<dbReference type="NCBIfam" id="NF000848">
    <property type="entry name" value="PRK00074.1"/>
    <property type="match status" value="1"/>
</dbReference>
<dbReference type="PANTHER" id="PTHR11922:SF2">
    <property type="entry name" value="GMP SYNTHASE [GLUTAMINE-HYDROLYZING]"/>
    <property type="match status" value="1"/>
</dbReference>
<dbReference type="PANTHER" id="PTHR11922">
    <property type="entry name" value="GMP SYNTHASE-RELATED"/>
    <property type="match status" value="1"/>
</dbReference>
<dbReference type="Pfam" id="PF00117">
    <property type="entry name" value="GATase"/>
    <property type="match status" value="1"/>
</dbReference>
<dbReference type="Pfam" id="PF00958">
    <property type="entry name" value="GMP_synt_C"/>
    <property type="match status" value="1"/>
</dbReference>
<dbReference type="Pfam" id="PF02540">
    <property type="entry name" value="NAD_synthase"/>
    <property type="match status" value="1"/>
</dbReference>
<dbReference type="PRINTS" id="PR00097">
    <property type="entry name" value="ANTSNTHASEII"/>
</dbReference>
<dbReference type="PRINTS" id="PR00099">
    <property type="entry name" value="CPSGATASE"/>
</dbReference>
<dbReference type="PRINTS" id="PR00096">
    <property type="entry name" value="GATASE"/>
</dbReference>
<dbReference type="SUPFAM" id="SSF52402">
    <property type="entry name" value="Adenine nucleotide alpha hydrolases-like"/>
    <property type="match status" value="1"/>
</dbReference>
<dbReference type="SUPFAM" id="SSF52317">
    <property type="entry name" value="Class I glutamine amidotransferase-like"/>
    <property type="match status" value="1"/>
</dbReference>
<dbReference type="SUPFAM" id="SSF54810">
    <property type="entry name" value="GMP synthetase C-terminal dimerisation domain"/>
    <property type="match status" value="1"/>
</dbReference>
<dbReference type="PROSITE" id="PS51273">
    <property type="entry name" value="GATASE_TYPE_1"/>
    <property type="match status" value="1"/>
</dbReference>
<dbReference type="PROSITE" id="PS51553">
    <property type="entry name" value="GMPS_ATP_PPASE"/>
    <property type="match status" value="1"/>
</dbReference>
<organism>
    <name type="scientific">Glaesserella parasuis serovar 5 (strain SH0165)</name>
    <name type="common">Haemophilus parasuis</name>
    <dbReference type="NCBI Taxonomy" id="557723"/>
    <lineage>
        <taxon>Bacteria</taxon>
        <taxon>Pseudomonadati</taxon>
        <taxon>Pseudomonadota</taxon>
        <taxon>Gammaproteobacteria</taxon>
        <taxon>Pasteurellales</taxon>
        <taxon>Pasteurellaceae</taxon>
        <taxon>Glaesserella</taxon>
    </lineage>
</organism>
<feature type="chain" id="PRO_1000190242" description="GMP synthase [glutamine-hydrolyzing]">
    <location>
        <begin position="1"/>
        <end position="523"/>
    </location>
</feature>
<feature type="domain" description="Glutamine amidotransferase type-1" evidence="1">
    <location>
        <begin position="8"/>
        <end position="205"/>
    </location>
</feature>
<feature type="domain" description="GMPS ATP-PPase" evidence="1">
    <location>
        <begin position="206"/>
        <end position="398"/>
    </location>
</feature>
<feature type="active site" description="Nucleophile" evidence="1">
    <location>
        <position position="85"/>
    </location>
</feature>
<feature type="active site" evidence="1">
    <location>
        <position position="179"/>
    </location>
</feature>
<feature type="active site" evidence="1">
    <location>
        <position position="181"/>
    </location>
</feature>
<feature type="binding site" evidence="1">
    <location>
        <begin position="233"/>
        <end position="239"/>
    </location>
    <ligand>
        <name>ATP</name>
        <dbReference type="ChEBI" id="CHEBI:30616"/>
    </ligand>
</feature>
<gene>
    <name evidence="1" type="primary">guaA</name>
    <name type="ordered locus">HAPS_0297</name>
</gene>
<accession>B8F3T2</accession>
<protein>
    <recommendedName>
        <fullName evidence="1">GMP synthase [glutamine-hydrolyzing]</fullName>
        <ecNumber evidence="1">6.3.5.2</ecNumber>
    </recommendedName>
    <alternativeName>
        <fullName evidence="1">GMP synthetase</fullName>
    </alternativeName>
    <alternativeName>
        <fullName evidence="1">Glutamine amidotransferase</fullName>
    </alternativeName>
</protein>
<reference key="1">
    <citation type="journal article" date="2009" name="J. Bacteriol.">
        <title>Complete genome sequence of Haemophilus parasuis SH0165.</title>
        <authorList>
            <person name="Yue M."/>
            <person name="Yang F."/>
            <person name="Yang J."/>
            <person name="Bei W."/>
            <person name="Cai X."/>
            <person name="Chen L."/>
            <person name="Dong J."/>
            <person name="Zhou R."/>
            <person name="Jin M."/>
            <person name="Jin Q."/>
            <person name="Chen H."/>
        </authorList>
    </citation>
    <scope>NUCLEOTIDE SEQUENCE [LARGE SCALE GENOMIC DNA]</scope>
    <source>
        <strain>SH0165</strain>
    </source>
</reference>
<sequence>MTNIHNHKILILDFGSQYTQLIARRVREIGVYCELWAWDVTEEQIREFNPTGIILSGGPESTTEENSPRAPEYVFNAGVPVLGICYGMQTMAMQLGGLTETSDHREFGYASVELKATDSLFAKLNDDLTACNPKLDVWMSHGDKVTRLPSNFQITGVTPTCPIAAMSDESRRFYGVQFHPEVTHTKSGLALLTNFVVNICGCETKWTAENIIEDAVARIKAQVGDDEVILGLSGGVDSSVTALLLHRAIGKNLHCVFVDNGLLRLNEGDQVMEMFGDKFGLNIIRVNAEDRFLDALKGIDEPEAKRKTIGKVFVDVFDDESKKLTSVKWLAQGTIYPDVIESAASKTGKAHVIKSHHNVGGLPDYMKLGLVEPLRELFKDEVRKIGLALGLPAEMLNRHPFPGPGLGVRVLGEIKKEYCDLVRRADAIFMEELHASGWYYKVSQAFTVFLPVKSVGVMGDGRKYDWAVSLRAVETIDFMTAHWAHLPYDLLGKISNRIINEVNGISRVVYDVSGKPPATIEWE</sequence>
<evidence type="ECO:0000255" key="1">
    <source>
        <dbReference type="HAMAP-Rule" id="MF_00344"/>
    </source>
</evidence>
<comment type="function">
    <text evidence="1">Catalyzes the synthesis of GMP from XMP.</text>
</comment>
<comment type="catalytic activity">
    <reaction evidence="1">
        <text>XMP + L-glutamine + ATP + H2O = GMP + L-glutamate + AMP + diphosphate + 2 H(+)</text>
        <dbReference type="Rhea" id="RHEA:11680"/>
        <dbReference type="ChEBI" id="CHEBI:15377"/>
        <dbReference type="ChEBI" id="CHEBI:15378"/>
        <dbReference type="ChEBI" id="CHEBI:29985"/>
        <dbReference type="ChEBI" id="CHEBI:30616"/>
        <dbReference type="ChEBI" id="CHEBI:33019"/>
        <dbReference type="ChEBI" id="CHEBI:57464"/>
        <dbReference type="ChEBI" id="CHEBI:58115"/>
        <dbReference type="ChEBI" id="CHEBI:58359"/>
        <dbReference type="ChEBI" id="CHEBI:456215"/>
        <dbReference type="EC" id="6.3.5.2"/>
    </reaction>
</comment>
<comment type="pathway">
    <text evidence="1">Purine metabolism; GMP biosynthesis; GMP from XMP (L-Gln route): step 1/1.</text>
</comment>
<comment type="subunit">
    <text evidence="1">Homodimer.</text>
</comment>
<name>GUAA_GLAP5</name>
<keyword id="KW-0067">ATP-binding</keyword>
<keyword id="KW-0315">Glutamine amidotransferase</keyword>
<keyword id="KW-0332">GMP biosynthesis</keyword>
<keyword id="KW-0436">Ligase</keyword>
<keyword id="KW-0547">Nucleotide-binding</keyword>
<keyword id="KW-0658">Purine biosynthesis</keyword>
<keyword id="KW-1185">Reference proteome</keyword>